<reference key="1">
    <citation type="submission" date="2008-05" db="EMBL/GenBank/DDBJ databases">
        <title>Genome sequence of Helicobacter pylori from the remote Amazon: traces of Asian ancestry of the first Americans.</title>
        <authorList>
            <person name="Kersulyte D."/>
            <person name="Kalia A."/>
            <person name="Gilman R.H."/>
            <person name="Berg D.E."/>
        </authorList>
    </citation>
    <scope>NUCLEOTIDE SEQUENCE [LARGE SCALE GENOMIC DNA]</scope>
    <source>
        <strain>Shi470</strain>
    </source>
</reference>
<name>G6PI_HELPS</name>
<sequence length="545" mass="62446">MLTQLKTYPKLLKHYEEIKEVHMRDWFSKDKERASRYFLQFESLSLDYSKNRLNDTTLKLLFELANDCSLKEKIEAMFKGEKINTTEKRAVLHTALRSLNDTEILLDNMEVLKSIRSVLKRMRAFSDSVRSGKRLGYTNQVITDIVNIGIGGSDLGALMVCTALKRYAHPRLKMHFVSNVDGTQILDVLEKLNPASTLFIVASKTFSTQETLTNALTARKWFVERSGDEKHIAKHFVAVSTNKEAVQQFGIDEHNMFEFWDFVGGRYSLWSAIGLSIMIYLGKKNFNALLKGAYLMDEHFRNAPFESNLPVLMGLIGVWYINFFQSKSHLIAPYDQYLRHFPKFIQQLDMESNGKRISKKGEIIPYDTCPVVWGDMGINAQHAFFQLLHQGTHLIPIDFIASLDKKPNAKGHHEILFSNVLAQAQAFMKGKSYEEALGELLFKGLDKDEAKDLAHHRVFFGNRPSNILLLEKISPSNIGALVALYEHKVFVQGVIWDINSFDQWGVELGKELAVPILQELEGHKSNAYFDSSTKRLIELYKNYNQ</sequence>
<organism>
    <name type="scientific">Helicobacter pylori (strain Shi470)</name>
    <dbReference type="NCBI Taxonomy" id="512562"/>
    <lineage>
        <taxon>Bacteria</taxon>
        <taxon>Pseudomonadati</taxon>
        <taxon>Campylobacterota</taxon>
        <taxon>Epsilonproteobacteria</taxon>
        <taxon>Campylobacterales</taxon>
        <taxon>Helicobacteraceae</taxon>
        <taxon>Helicobacter</taxon>
    </lineage>
</organism>
<gene>
    <name evidence="1" type="primary">pgi</name>
    <name type="ordered locus">HPSH_06020</name>
</gene>
<proteinExistence type="inferred from homology"/>
<comment type="function">
    <text evidence="1">Catalyzes the reversible isomerization of glucose-6-phosphate to fructose-6-phosphate.</text>
</comment>
<comment type="catalytic activity">
    <reaction evidence="1">
        <text>alpha-D-glucose 6-phosphate = beta-D-fructose 6-phosphate</text>
        <dbReference type="Rhea" id="RHEA:11816"/>
        <dbReference type="ChEBI" id="CHEBI:57634"/>
        <dbReference type="ChEBI" id="CHEBI:58225"/>
        <dbReference type="EC" id="5.3.1.9"/>
    </reaction>
</comment>
<comment type="pathway">
    <text evidence="1">Carbohydrate biosynthesis; gluconeogenesis.</text>
</comment>
<comment type="pathway">
    <text evidence="1">Carbohydrate degradation; glycolysis; D-glyceraldehyde 3-phosphate and glycerone phosphate from D-glucose: step 2/4.</text>
</comment>
<comment type="subcellular location">
    <subcellularLocation>
        <location evidence="1">Cytoplasm</location>
    </subcellularLocation>
</comment>
<comment type="similarity">
    <text evidence="1">Belongs to the GPI family.</text>
</comment>
<feature type="chain" id="PRO_1000125732" description="Glucose-6-phosphate isomerase">
    <location>
        <begin position="1"/>
        <end position="545"/>
    </location>
</feature>
<feature type="active site" description="Proton donor" evidence="1">
    <location>
        <position position="351"/>
    </location>
</feature>
<feature type="active site" evidence="1">
    <location>
        <position position="382"/>
    </location>
</feature>
<feature type="active site" evidence="1">
    <location>
        <position position="510"/>
    </location>
</feature>
<accession>B2UUS4</accession>
<dbReference type="EC" id="5.3.1.9" evidence="1"/>
<dbReference type="EMBL" id="CP001072">
    <property type="protein sequence ID" value="ACD48606.1"/>
    <property type="molecule type" value="Genomic_DNA"/>
</dbReference>
<dbReference type="RefSeq" id="WP_000957649.1">
    <property type="nucleotide sequence ID" value="NC_010698.2"/>
</dbReference>
<dbReference type="SMR" id="B2UUS4"/>
<dbReference type="KEGG" id="hps:HPSH_06020"/>
<dbReference type="HOGENOM" id="CLU_017947_3_1_7"/>
<dbReference type="UniPathway" id="UPA00109">
    <property type="reaction ID" value="UER00181"/>
</dbReference>
<dbReference type="UniPathway" id="UPA00138"/>
<dbReference type="GO" id="GO:0005829">
    <property type="term" value="C:cytosol"/>
    <property type="evidence" value="ECO:0007669"/>
    <property type="project" value="TreeGrafter"/>
</dbReference>
<dbReference type="GO" id="GO:0097367">
    <property type="term" value="F:carbohydrate derivative binding"/>
    <property type="evidence" value="ECO:0007669"/>
    <property type="project" value="InterPro"/>
</dbReference>
<dbReference type="GO" id="GO:0004347">
    <property type="term" value="F:glucose-6-phosphate isomerase activity"/>
    <property type="evidence" value="ECO:0007669"/>
    <property type="project" value="UniProtKB-UniRule"/>
</dbReference>
<dbReference type="GO" id="GO:0048029">
    <property type="term" value="F:monosaccharide binding"/>
    <property type="evidence" value="ECO:0007669"/>
    <property type="project" value="TreeGrafter"/>
</dbReference>
<dbReference type="GO" id="GO:0006094">
    <property type="term" value="P:gluconeogenesis"/>
    <property type="evidence" value="ECO:0007669"/>
    <property type="project" value="UniProtKB-UniRule"/>
</dbReference>
<dbReference type="GO" id="GO:0051156">
    <property type="term" value="P:glucose 6-phosphate metabolic process"/>
    <property type="evidence" value="ECO:0007669"/>
    <property type="project" value="TreeGrafter"/>
</dbReference>
<dbReference type="GO" id="GO:0006096">
    <property type="term" value="P:glycolytic process"/>
    <property type="evidence" value="ECO:0007669"/>
    <property type="project" value="UniProtKB-UniRule"/>
</dbReference>
<dbReference type="CDD" id="cd05015">
    <property type="entry name" value="SIS_PGI_1"/>
    <property type="match status" value="1"/>
</dbReference>
<dbReference type="CDD" id="cd05016">
    <property type="entry name" value="SIS_PGI_2"/>
    <property type="match status" value="1"/>
</dbReference>
<dbReference type="FunFam" id="1.10.1390.10:FF:000001">
    <property type="entry name" value="Glucose-6-phosphate isomerase"/>
    <property type="match status" value="1"/>
</dbReference>
<dbReference type="FunFam" id="3.40.50.10490:FF:000018">
    <property type="entry name" value="Glucose-6-phosphate isomerase"/>
    <property type="match status" value="1"/>
</dbReference>
<dbReference type="Gene3D" id="1.10.1390.10">
    <property type="match status" value="1"/>
</dbReference>
<dbReference type="Gene3D" id="3.40.50.10490">
    <property type="entry name" value="Glucose-6-phosphate isomerase like protein, domain 1"/>
    <property type="match status" value="2"/>
</dbReference>
<dbReference type="HAMAP" id="MF_00473">
    <property type="entry name" value="G6P_isomerase"/>
    <property type="match status" value="1"/>
</dbReference>
<dbReference type="InterPro" id="IPR001672">
    <property type="entry name" value="G6P_Isomerase"/>
</dbReference>
<dbReference type="InterPro" id="IPR023096">
    <property type="entry name" value="G6P_Isomerase_C"/>
</dbReference>
<dbReference type="InterPro" id="IPR018189">
    <property type="entry name" value="Phosphoglucose_isomerase_CS"/>
</dbReference>
<dbReference type="InterPro" id="IPR046348">
    <property type="entry name" value="SIS_dom_sf"/>
</dbReference>
<dbReference type="InterPro" id="IPR035476">
    <property type="entry name" value="SIS_PGI_1"/>
</dbReference>
<dbReference type="InterPro" id="IPR035482">
    <property type="entry name" value="SIS_PGI_2"/>
</dbReference>
<dbReference type="NCBIfam" id="NF001211">
    <property type="entry name" value="PRK00179.1"/>
    <property type="match status" value="1"/>
</dbReference>
<dbReference type="PANTHER" id="PTHR11469">
    <property type="entry name" value="GLUCOSE-6-PHOSPHATE ISOMERASE"/>
    <property type="match status" value="1"/>
</dbReference>
<dbReference type="PANTHER" id="PTHR11469:SF1">
    <property type="entry name" value="GLUCOSE-6-PHOSPHATE ISOMERASE"/>
    <property type="match status" value="1"/>
</dbReference>
<dbReference type="Pfam" id="PF00342">
    <property type="entry name" value="PGI"/>
    <property type="match status" value="1"/>
</dbReference>
<dbReference type="PRINTS" id="PR00662">
    <property type="entry name" value="G6PISOMERASE"/>
</dbReference>
<dbReference type="SUPFAM" id="SSF53697">
    <property type="entry name" value="SIS domain"/>
    <property type="match status" value="1"/>
</dbReference>
<dbReference type="PROSITE" id="PS00765">
    <property type="entry name" value="P_GLUCOSE_ISOMERASE_1"/>
    <property type="match status" value="1"/>
</dbReference>
<dbReference type="PROSITE" id="PS00174">
    <property type="entry name" value="P_GLUCOSE_ISOMERASE_2"/>
    <property type="match status" value="1"/>
</dbReference>
<dbReference type="PROSITE" id="PS51463">
    <property type="entry name" value="P_GLUCOSE_ISOMERASE_3"/>
    <property type="match status" value="1"/>
</dbReference>
<protein>
    <recommendedName>
        <fullName evidence="1">Glucose-6-phosphate isomerase</fullName>
        <shortName evidence="1">GPI</shortName>
        <ecNumber evidence="1">5.3.1.9</ecNumber>
    </recommendedName>
    <alternativeName>
        <fullName evidence="1">Phosphoglucose isomerase</fullName>
        <shortName evidence="1">PGI</shortName>
    </alternativeName>
    <alternativeName>
        <fullName evidence="1">Phosphohexose isomerase</fullName>
        <shortName evidence="1">PHI</shortName>
    </alternativeName>
</protein>
<evidence type="ECO:0000255" key="1">
    <source>
        <dbReference type="HAMAP-Rule" id="MF_00473"/>
    </source>
</evidence>
<keyword id="KW-0963">Cytoplasm</keyword>
<keyword id="KW-0312">Gluconeogenesis</keyword>
<keyword id="KW-0324">Glycolysis</keyword>
<keyword id="KW-0413">Isomerase</keyword>